<sequence>MAPQLLLCLILTFLWSLPEAESNVFLKSKVANRFLQRTKRANSLVEEFKSGNIERECIEERCSKEEAREVFEDDEKTETFWNVYVDGDQCSSNPCHYRGICKDGIGSYTCTCLSGYEGKNCERVLYKSCRVDNGNCWHFCKSVQNDIQCSCAEGYLLGEDGHSCVAGGNFSCGRNIKTRNKREASLPDFVQSHNATLLKKSDNPSPDIRIVNGMDCKLGECPWQAALVDDKKGVFCGGTILSPIYVLTAAHCINETETISVVVGEIDRSRAETGPLLSVDKVYVHKKFVPPKKSQEFYEKFDLVSYDYDIAIIQMKTPIQFSENVVPACLPTADFANQVLMKQDFGIVSGFGGIFERGPNSKTLKVLKVPYVDRHTCMLSSNFPITPTMFCAGYDTLPQDACQGDSGGPHITAYRDTHFITGIVSWGEGCARKGRYGIYTKLSKFIPWIKRIMRQKLPSTESSTGRL</sequence>
<organism>
    <name type="scientific">Pseudonaja textilis</name>
    <name type="common">Eastern brown snake</name>
    <dbReference type="NCBI Taxonomy" id="8673"/>
    <lineage>
        <taxon>Eukaryota</taxon>
        <taxon>Metazoa</taxon>
        <taxon>Chordata</taxon>
        <taxon>Craniata</taxon>
        <taxon>Vertebrata</taxon>
        <taxon>Euteleostomi</taxon>
        <taxon>Lepidosauria</taxon>
        <taxon>Squamata</taxon>
        <taxon>Bifurcata</taxon>
        <taxon>Unidentata</taxon>
        <taxon>Episquamata</taxon>
        <taxon>Toxicofera</taxon>
        <taxon>Serpentes</taxon>
        <taxon>Colubroidea</taxon>
        <taxon>Elapidae</taxon>
        <taxon>Hydrophiinae</taxon>
        <taxon>Pseudonaja</taxon>
    </lineage>
</organism>
<keyword id="KW-0002">3D-structure</keyword>
<keyword id="KW-1204">Blood coagulation cascade activating toxin</keyword>
<keyword id="KW-0106">Calcium</keyword>
<keyword id="KW-0165">Cleavage on pair of basic residues</keyword>
<keyword id="KW-0903">Direct protein sequencing</keyword>
<keyword id="KW-1015">Disulfide bond</keyword>
<keyword id="KW-0245">EGF-like domain</keyword>
<keyword id="KW-0301">Gamma-carboxyglutamic acid</keyword>
<keyword id="KW-0325">Glycoprotein</keyword>
<keyword id="KW-1199">Hemostasis impairing toxin</keyword>
<keyword id="KW-0378">Hydrolase</keyword>
<keyword id="KW-0582">Pharmaceutical</keyword>
<keyword id="KW-0645">Protease</keyword>
<keyword id="KW-0655">Prothrombin activator</keyword>
<keyword id="KW-1185">Reference proteome</keyword>
<keyword id="KW-0677">Repeat</keyword>
<keyword id="KW-0964">Secreted</keyword>
<keyword id="KW-0720">Serine protease</keyword>
<keyword id="KW-0732">Signal</keyword>
<keyword id="KW-0800">Toxin</keyword>
<comment type="function">
    <text evidence="7 9">Snake prothrombin activator that attacks the hemostatic system of prey. This non-catalytic subunit is functionally similar to blood coagulation factor V (PubMed:12362232, PubMed:23869089). It serves as a critical cofactor for the prothrombinase activity of the catalytic subunit, which is similar to the blood coagulation factor X (PubMed:12362232, PubMed:23869089). The complex converts prothrombin to thrombin by sequential cleavage at two positions, Arg-320 followed by Arg-271 (PubMed:23869089). Cleavage at Arg-320 produces an active intermediate known as meizothrombin (PubMed:23869089). Meizothrombin is the 'second' substrate for prothrombinase, and it docks in an altered manner to present the second cleavage site (271) (PubMed:23869089). Cleavage at Arg-271 releases active thrombin from its pro-fragment (PubMed:23869089). This order of events is reversed if the protease component of prothrombinase is used on its own, suggesting that the 271 site is inherently more accessible to proteolysis (PubMed:23869089). The complex converts prothrombin to thrombin in presence but also in the absence of membrane (PubMed:23869089).</text>
</comment>
<comment type="catalytic activity">
    <reaction evidence="7 9">
        <text>Selective cleavage of Arg-|-Thr and then Arg-|-Ile bonds in prothrombin to form thrombin.</text>
        <dbReference type="EC" id="3.4.21.6"/>
    </reaction>
</comment>
<comment type="activity regulation">
    <text evidence="7 9">Activated by calcium and negatively charged phospholipids.</text>
</comment>
<comment type="subunit">
    <text evidence="7 9 10">Heterodimer of a light and a heavy chains; disulfide-linked. Is associated with pseutarin-C non-catalytic subunit (AC Q7SZN0) in a non-covalent manner.</text>
</comment>
<comment type="subcellular location">
    <subcellularLocation>
        <location evidence="7 10">Secreted</location>
    </subcellularLocation>
</comment>
<comment type="tissue specificity">
    <text evidence="7 10">Expressed by the venom gland.</text>
</comment>
<comment type="PTM">
    <text evidence="6 7">Gamma-carboxyglutamate residues are formed by vitamin K dependent carboxylation. These residues are essential for the binding of calcium.</text>
</comment>
<comment type="toxic dose">
    <text evidence="8 10">Intravenous injection (23 ug/kg bodyweight) of the group C prothrombin activator causes death in rats through disseminated intravascular coagulopathy (PubMed:3075905), whereas pseutarin-C is not lethal even at 10 mg/kg in mice when injected intraperitoneally (PubMed:15351847).</text>
</comment>
<comment type="pharmaceutical">
    <text>Is under preclinical trial by the Australian biopharmaceutical company QRxPharma Ltd, its subsidiary Venomics Pty Ltd (VPL) and the University of Queensland (UQ) under the name Haempatch (Q8009). Tested as a topical hemostatic agent to reduce blood loss resulting from surgery or trauma.</text>
</comment>
<comment type="miscellaneous">
    <text evidence="12">Is classified in the group C of snake venom prothrombin activators, since it does not require the mammalian factor Va for the cleavage of prothrombin as the venom contains its own non-catalytic factor Va-like molecule.</text>
</comment>
<comment type="miscellaneous">
    <text>In contrast to blood coagulation factors that circulate as inactive zymogen in plasma, venom prothrombin activators are always found in the active form in the venom. Hence, catalytic and non-catalytic subunits are found naturally in venom as stable complexes.</text>
</comment>
<comment type="similarity">
    <text evidence="5">Belongs to the peptidase S1 family. Snake venom subfamily.</text>
</comment>
<feature type="signal peptide" evidence="3">
    <location>
        <begin position="1"/>
        <end position="22"/>
    </location>
</feature>
<feature type="propeptide" id="PRO_0000408523" evidence="7 8">
    <location>
        <begin position="23"/>
        <end position="40"/>
    </location>
</feature>
<feature type="chain" id="PRO_5000090539" description="Pseutarin-C catalytic subunit light chain">
    <location>
        <begin position="41"/>
        <end position="181"/>
    </location>
</feature>
<feature type="propeptide" id="PRO_0000408525" description="Activation peptide" evidence="1">
    <location>
        <begin position="182"/>
        <end position="209"/>
    </location>
</feature>
<feature type="chain" id="PRO_0000408526" description="Pseutarin-C catalytic subunit heavy chain">
    <location>
        <begin position="210"/>
        <end position="467"/>
    </location>
</feature>
<feature type="domain" description="Gla" evidence="6">
    <location>
        <begin position="41"/>
        <end position="86"/>
    </location>
</feature>
<feature type="domain" description="EGF-like 1; calcium-binding" evidence="4">
    <location>
        <begin position="86"/>
        <end position="122"/>
    </location>
</feature>
<feature type="domain" description="EGF-like 2" evidence="4">
    <location>
        <begin position="129"/>
        <end position="164"/>
    </location>
</feature>
<feature type="domain" description="Peptidase S1" evidence="5">
    <location>
        <begin position="210"/>
        <end position="454"/>
    </location>
</feature>
<feature type="active site" description="Charge relay system" evidence="1">
    <location>
        <position position="251"/>
    </location>
</feature>
<feature type="active site" description="Charge relay system" evidence="1">
    <location>
        <position position="309"/>
    </location>
</feature>
<feature type="active site" description="Charge relay system" evidence="1">
    <location>
        <position position="406"/>
    </location>
</feature>
<feature type="site" description="Not modified" evidence="11">
    <location>
        <position position="75"/>
    </location>
</feature>
<feature type="site" description="Not modified">
    <location>
        <position position="103"/>
    </location>
</feature>
<feature type="site" description="Cleavage">
    <location>
        <begin position="209"/>
        <end position="210"/>
    </location>
</feature>
<feature type="modified residue" description="4-carboxyglutamate" evidence="6 7">
    <location>
        <position position="46"/>
    </location>
</feature>
<feature type="modified residue" description="4-carboxyglutamate" evidence="6 7">
    <location>
        <position position="47"/>
    </location>
</feature>
<feature type="modified residue" description="4-carboxyglutamate" evidence="6 7">
    <location>
        <position position="54"/>
    </location>
</feature>
<feature type="modified residue" description="4-carboxyglutamate" evidence="6 7">
    <location>
        <position position="56"/>
    </location>
</feature>
<feature type="modified residue" description="4-carboxyglutamate" evidence="6 7">
    <location>
        <position position="59"/>
    </location>
</feature>
<feature type="modified residue" description="4-carboxyglutamate" evidence="6 7">
    <location>
        <position position="60"/>
    </location>
</feature>
<feature type="modified residue" description="4-carboxyglutamate" evidence="6 7">
    <location>
        <position position="65"/>
    </location>
</feature>
<feature type="modified residue" description="4-carboxyglutamate" evidence="6 7">
    <location>
        <position position="66"/>
    </location>
</feature>
<feature type="modified residue" description="4-carboxyglutamate" evidence="6">
    <location>
        <position position="69"/>
    </location>
</feature>
<feature type="modified residue" description="4-carboxyglutamate" evidence="6">
    <location>
        <position position="72"/>
    </location>
</feature>
<feature type="glycosylation site" description="O-linked (Hex...) serine" evidence="8">
    <location>
        <position position="92"/>
    </location>
</feature>
<feature type="glycosylation site" description="N-linked (GlcNAc...) asparagine" evidence="8">
    <location>
        <position position="254"/>
    </location>
</feature>
<feature type="disulfide bond" evidence="1">
    <location>
        <begin position="57"/>
        <end position="62"/>
    </location>
</feature>
<feature type="disulfide bond" evidence="2">
    <location>
        <begin position="90"/>
        <end position="101"/>
    </location>
</feature>
<feature type="disulfide bond" evidence="2">
    <location>
        <begin position="95"/>
        <end position="110"/>
    </location>
</feature>
<feature type="disulfide bond" evidence="2">
    <location>
        <begin position="112"/>
        <end position="121"/>
    </location>
</feature>
<feature type="disulfide bond" evidence="9 13 14">
    <location>
        <begin position="129"/>
        <end position="140"/>
    </location>
</feature>
<feature type="disulfide bond" evidence="9 13 14">
    <location>
        <begin position="136"/>
        <end position="149"/>
    </location>
</feature>
<feature type="disulfide bond" evidence="9 13 14">
    <location>
        <begin position="151"/>
        <end position="164"/>
    </location>
</feature>
<feature type="disulfide bond" description="Interchain (between light and heavy chains)" evidence="9 13 14">
    <location>
        <begin position="172"/>
        <end position="329"/>
    </location>
</feature>
<feature type="disulfide bond" evidence="9 13 14">
    <location>
        <begin position="216"/>
        <end position="221"/>
    </location>
</feature>
<feature type="disulfide bond" evidence="9 13 14">
    <location>
        <begin position="236"/>
        <end position="252"/>
    </location>
</feature>
<feature type="disulfide bond" evidence="9 13 14">
    <location>
        <begin position="377"/>
        <end position="391"/>
    </location>
</feature>
<feature type="disulfide bond" evidence="9 13 14">
    <location>
        <begin position="402"/>
        <end position="430"/>
    </location>
</feature>
<feature type="sequence conflict" description="In Ref. 8; AAT42490." evidence="11" ref="8">
    <original>K</original>
    <variation>E</variation>
    <location>
        <position position="39"/>
    </location>
</feature>
<feature type="sequence conflict" description="In Ref. 1; AAP86642." evidence="11" ref="1">
    <original>V</original>
    <variation>A</variation>
    <location>
        <position position="70"/>
    </location>
</feature>
<feature type="sequence conflict" description="In Ref. 8; AAT42490." evidence="11" ref="8">
    <original>S</original>
    <variation>H</variation>
    <location>
        <position position="142"/>
    </location>
</feature>
<feature type="sequence conflict" description="In Ref. 8; AAT42490." evidence="11" ref="8">
    <original>S</original>
    <variation>N</variation>
    <location>
        <position position="185"/>
    </location>
</feature>
<feature type="sequence conflict" description="In Ref. 1; AAP86642 and 8; AAT42490." evidence="11" ref="1 8">
    <original>H</original>
    <variation>Q</variation>
    <location>
        <position position="193"/>
    </location>
</feature>
<feature type="sequence conflict" description="In Ref. 1; AAP86642." evidence="11" ref="1">
    <original>T</original>
    <variation>P</variation>
    <location>
        <position position="196"/>
    </location>
</feature>
<feature type="sequence conflict" description="In Ref. 1; AAP86642." evidence="11" ref="1">
    <original>K</original>
    <variation>I</variation>
    <location>
        <position position="200"/>
    </location>
</feature>
<feature type="sequence conflict" description="In Ref. 8; AAT42490." evidence="11" ref="8">
    <original>DKK</original>
    <variation>EKE</variation>
    <location>
        <begin position="230"/>
        <end position="232"/>
    </location>
</feature>
<feature type="sequence conflict" description="In Ref. 8; AAT42490." evidence="11" ref="8">
    <original>RSRA</original>
    <variation>KSRI</variation>
    <location>
        <begin position="268"/>
        <end position="271"/>
    </location>
</feature>
<feature type="sequence conflict" description="In Ref. 8; AAT42490." evidence="11" ref="8">
    <original>V</original>
    <variation>I</variation>
    <location>
        <position position="282"/>
    </location>
</feature>
<feature type="sequence conflict" description="In Ref. 8; AAT42490." evidence="11" ref="8">
    <original>KKSQEFYEKFDLVS</original>
    <variation>QKAYKFDLAA</variation>
    <location>
        <begin position="292"/>
        <end position="305"/>
    </location>
</feature>
<feature type="sequence conflict" description="In Ref. 8; AAT42490." evidence="11" ref="8">
    <original>GIFERGPN</original>
    <variation>RIVEKGPK</variation>
    <location>
        <begin position="353"/>
        <end position="360"/>
    </location>
</feature>
<feature type="sequence conflict" description="In Ref. 8; AAT42490." evidence="11" ref="8">
    <original>LSSNFPITPT</original>
    <variation>VSSETPITPN</variation>
    <location>
        <begin position="379"/>
        <end position="388"/>
    </location>
</feature>
<feature type="sequence conflict" description="In Ref. 8; AAT42490." evidence="11" ref="8">
    <original>Q</original>
    <variation>R</variation>
    <location>
        <position position="399"/>
    </location>
</feature>
<feature type="sequence conflict" description="In Ref. 8; AAT42490." evidence="11" ref="8">
    <original>ITA</original>
    <variation>TTV</variation>
    <location>
        <begin position="411"/>
        <end position="413"/>
    </location>
</feature>
<feature type="sequence conflict" description="In Ref. 8; AAT42490." evidence="11" ref="8">
    <original>W</original>
    <variation>S</variation>
    <location>
        <position position="426"/>
    </location>
</feature>
<feature type="sequence conflict" description="In Ref. 8; AAT42490." evidence="11" ref="8">
    <original>KGRYGI</original>
    <variation>NGKYGN</variation>
    <location>
        <begin position="433"/>
        <end position="438"/>
    </location>
</feature>
<feature type="sequence conflict" description="In Ref. 1; AAP86642." evidence="11" ref="1">
    <location>
        <begin position="450"/>
        <end position="467"/>
    </location>
</feature>
<feature type="turn" evidence="15">
    <location>
        <begin position="128"/>
        <end position="132"/>
    </location>
</feature>
<feature type="helix" evidence="16">
    <location>
        <begin position="133"/>
        <end position="135"/>
    </location>
</feature>
<feature type="strand" evidence="16">
    <location>
        <begin position="137"/>
        <end position="141"/>
    </location>
</feature>
<feature type="strand" evidence="15">
    <location>
        <begin position="144"/>
        <end position="146"/>
    </location>
</feature>
<feature type="strand" evidence="16">
    <location>
        <begin position="148"/>
        <end position="150"/>
    </location>
</feature>
<feature type="strand" evidence="16">
    <location>
        <begin position="155"/>
        <end position="157"/>
    </location>
</feature>
<feature type="strand" evidence="16">
    <location>
        <begin position="164"/>
        <end position="168"/>
    </location>
</feature>
<feature type="turn" evidence="15">
    <location>
        <begin position="218"/>
        <end position="220"/>
    </location>
</feature>
<feature type="strand" evidence="16">
    <location>
        <begin position="224"/>
        <end position="229"/>
    </location>
</feature>
<feature type="turn" evidence="16">
    <location>
        <begin position="230"/>
        <end position="232"/>
    </location>
</feature>
<feature type="strand" evidence="16">
    <location>
        <begin position="233"/>
        <end position="240"/>
    </location>
</feature>
<feature type="strand" evidence="16">
    <location>
        <begin position="242"/>
        <end position="248"/>
    </location>
</feature>
<feature type="helix" evidence="16">
    <location>
        <begin position="250"/>
        <end position="252"/>
    </location>
</feature>
<feature type="strand" evidence="16">
    <location>
        <begin position="253"/>
        <end position="257"/>
    </location>
</feature>
<feature type="strand" evidence="16">
    <location>
        <begin position="260"/>
        <end position="264"/>
    </location>
</feature>
<feature type="helix" evidence="16">
    <location>
        <begin position="268"/>
        <end position="273"/>
    </location>
</feature>
<feature type="strand" evidence="16">
    <location>
        <begin position="279"/>
        <end position="285"/>
    </location>
</feature>
<feature type="helix" evidence="16">
    <location>
        <begin position="291"/>
        <end position="295"/>
    </location>
</feature>
<feature type="turn" evidence="16">
    <location>
        <begin position="305"/>
        <end position="308"/>
    </location>
</feature>
<feature type="strand" evidence="16">
    <location>
        <begin position="311"/>
        <end position="317"/>
    </location>
</feature>
<feature type="helix" evidence="16">
    <location>
        <begin position="333"/>
        <end position="338"/>
    </location>
</feature>
<feature type="helix" evidence="16">
    <location>
        <begin position="340"/>
        <end position="342"/>
    </location>
</feature>
<feature type="strand" evidence="16">
    <location>
        <begin position="343"/>
        <end position="351"/>
    </location>
</feature>
<feature type="strand" evidence="16">
    <location>
        <begin position="353"/>
        <end position="355"/>
    </location>
</feature>
<feature type="strand" evidence="16">
    <location>
        <begin position="365"/>
        <end position="371"/>
    </location>
</feature>
<feature type="helix" evidence="16">
    <location>
        <begin position="374"/>
        <end position="378"/>
    </location>
</feature>
<feature type="strand" evidence="16">
    <location>
        <begin position="389"/>
        <end position="392"/>
    </location>
</feature>
<feature type="strand" evidence="16">
    <location>
        <begin position="395"/>
        <end position="398"/>
    </location>
</feature>
<feature type="strand" evidence="16">
    <location>
        <begin position="409"/>
        <end position="414"/>
    </location>
</feature>
<feature type="strand" evidence="16">
    <location>
        <begin position="417"/>
        <end position="426"/>
    </location>
</feature>
<feature type="strand" evidence="16">
    <location>
        <begin position="428"/>
        <end position="431"/>
    </location>
</feature>
<feature type="strand" evidence="16">
    <location>
        <begin position="437"/>
        <end position="440"/>
    </location>
</feature>
<feature type="helix" evidence="16">
    <location>
        <begin position="442"/>
        <end position="444"/>
    </location>
</feature>
<feature type="helix" evidence="16">
    <location>
        <begin position="446"/>
        <end position="452"/>
    </location>
</feature>
<reference key="1">
    <citation type="journal article" date="2004" name="Thromb. Haemost.">
        <title>The catalytic subunit of pseutarin C, a group C prothrombin activator from the venom of Pseudonaja textilis, is structurally similar to mammalian blood coagulation factor Xa.</title>
        <authorList>
            <person name="Rao V.S."/>
            <person name="Swarup S."/>
            <person name="Kini R.M."/>
        </authorList>
    </citation>
    <scope>NUCLEOTIDE SEQUENCE [GENOMIC DNA / MRNA]</scope>
    <scope>PROTEIN SEQUENCE OF 41-70; 77-119; 142-177; 210-242 AND 271-281</scope>
    <scope>TOXIC DOSE</scope>
    <scope>GLYCOSYLATION AT SER-92 AND ASN-254</scope>
    <scope>IDENTIFICATION BY MASS SPECTROMETRY</scope>
    <source>
        <tissue>Venom gland</tissue>
    </source>
</reference>
<reference key="2">
    <citation type="journal article" date="2005" name="Br. J. Haematol.">
        <title>Cloning and functional expression of venom prothrombin activator protease from Pseudonaja textilis with whole blood procoagulant activity.</title>
        <authorList>
            <person name="Filippovich I."/>
            <person name="Sorokina N."/>
            <person name="St Pierre L."/>
            <person name="Flight S."/>
            <person name="de Jersey J."/>
            <person name="Perry N."/>
            <person name="Masci P.P."/>
            <person name="Lavin M.F."/>
        </authorList>
    </citation>
    <scope>NUCLEOTIDE SEQUENCE [MRNA]</scope>
    <source>
        <tissue>Venom gland</tissue>
    </source>
</reference>
<reference key="3">
    <citation type="journal article" date="2007" name="J. Thromb. Haemost.">
        <title>Structure of two genes encoding parallel prothrombin activators in Tropidechis carinatus snake: gene duplication and recruitment of factor X gene to the venom gland.</title>
        <authorList>
            <person name="Reza M.A."/>
            <person name="Swarup S."/>
            <person name="Kini R.M."/>
        </authorList>
    </citation>
    <scope>NUCLEOTIDE SEQUENCE [GENOMIC DNA] OF 1-17</scope>
</reference>
<reference key="4">
    <citation type="journal article" date="2002" name="Thromb. Haemost.">
        <title>Pseutarin C, a prothrombin activator from Pseudonaja textilis venom: its structural and functional similarity to mammalian coagulation factor Xa-Va complex.</title>
        <authorList>
            <person name="Rao V.S."/>
            <person name="Kini R.M."/>
        </authorList>
    </citation>
    <scope>PROTEIN SEQUENCE OF 41-70 AND 210-246</scope>
    <scope>FUNCTION</scope>
    <scope>CATALYTIC ACTIVITY</scope>
    <scope>ACTIVITY REGULATION</scope>
    <scope>SUBUNIT</scope>
    <scope>SUBCELLULAR LOCATION</scope>
    <scope>TISSUE SPECIFICITY</scope>
    <scope>GAMMA-CARBOXYGLUTAMATION AT GLU-46; GLU-47; GLU-54; GLU-56; GLU-59; GLU-60; GLU-65 AND GLU-66</scope>
    <source>
        <tissue>Venom</tissue>
    </source>
</reference>
<reference key="5">
    <citation type="journal article" date="1988" name="Biochem. Int.">
        <title>Purification and characterization of a prothrombin activator from the venom of the Australian brown snake, Pseudonaja textilis textilis.</title>
        <authorList>
            <person name="Masci P.P."/>
            <person name="Whitaker A.N."/>
            <person name="de Jersey J."/>
        </authorList>
    </citation>
    <scope>TOXIC DOSE</scope>
    <scope>SUBUNIT</scope>
    <scope>SUBCELLULAR LOCATION</scope>
    <scope>TISSUE SPECIFICITY</scope>
    <source>
        <strain>Pseudonaja textilis textilis</strain>
        <tissue>Venom</tissue>
    </source>
</reference>
<reference key="6">
    <citation type="journal article" date="2001" name="Thromb. Haemost.">
        <title>Classification and nomenclature of prothrombin activators isolated from snake venoms.</title>
        <authorList>
            <person name="Manjunatha Kini R."/>
            <person name="Morita T."/>
            <person name="Rosing J."/>
        </authorList>
    </citation>
    <scope>NOMENCLATURE</scope>
</reference>
<reference key="7">
    <citation type="journal article" date="2012" name="Toxicon">
        <title>Drug development from Australian elapid snake venoms and the Venomics pipeline of candidates for haemostasis: Textilinin-1 (Q8008), Haempatch (Q8009) and CoVase (V0801).</title>
        <authorList>
            <person name="Earl S.T."/>
            <person name="Masci P.P."/>
            <person name="de Jersey J."/>
            <person name="Lavin M.F."/>
            <person name="Dixon J."/>
        </authorList>
    </citation>
    <scope>PHARMACEUTICAL</scope>
</reference>
<reference evidence="13 14" key="8">
    <citation type="journal article" date="2013" name="Blood">
        <title>Crystal structure of the prothrombinase complex from the venom of Pseudonaja textilis.</title>
        <authorList>
            <person name="Lechtenberg B.C."/>
            <person name="Murray-Rust T.A."/>
            <person name="Johnson D.J."/>
            <person name="Adams T.E."/>
            <person name="Krishnaswamy S."/>
            <person name="Camire R.M."/>
            <person name="Huntington J.A."/>
        </authorList>
    </citation>
    <scope>X-RAY CRYSTALLOGRAPHY (2.71 ANGSTROMS) OF 41-463 IN COMPLEX WITH PSEUTARIN-C NON-CATALYTIC SUBUNIT</scope>
    <scope>DISULFIDE BONDS</scope>
    <scope>FUNCTION</scope>
    <scope>CATALYTIC ACTIVITY</scope>
</reference>
<proteinExistence type="evidence at protein level"/>
<evidence type="ECO:0000250" key="1"/>
<evidence type="ECO:0000250" key="2">
    <source>
        <dbReference type="UniProtKB" id="P00742"/>
    </source>
</evidence>
<evidence type="ECO:0000255" key="3"/>
<evidence type="ECO:0000255" key="4">
    <source>
        <dbReference type="PROSITE-ProRule" id="PRU00076"/>
    </source>
</evidence>
<evidence type="ECO:0000255" key="5">
    <source>
        <dbReference type="PROSITE-ProRule" id="PRU00274"/>
    </source>
</evidence>
<evidence type="ECO:0000255" key="6">
    <source>
        <dbReference type="PROSITE-ProRule" id="PRU00463"/>
    </source>
</evidence>
<evidence type="ECO:0000269" key="7">
    <source>
    </source>
</evidence>
<evidence type="ECO:0000269" key="8">
    <source>
    </source>
</evidence>
<evidence type="ECO:0000269" key="9">
    <source>
    </source>
</evidence>
<evidence type="ECO:0000269" key="10">
    <source>
    </source>
</evidence>
<evidence type="ECO:0000305" key="11"/>
<evidence type="ECO:0000305" key="12">
    <source>
    </source>
</evidence>
<evidence type="ECO:0007744" key="13">
    <source>
        <dbReference type="PDB" id="4BXS"/>
    </source>
</evidence>
<evidence type="ECO:0007744" key="14">
    <source>
        <dbReference type="PDB" id="4BXW"/>
    </source>
</evidence>
<evidence type="ECO:0007829" key="15">
    <source>
        <dbReference type="PDB" id="4BXS"/>
    </source>
</evidence>
<evidence type="ECO:0007829" key="16">
    <source>
        <dbReference type="PDB" id="4BXW"/>
    </source>
</evidence>
<name>FAXC_PSETE</name>
<protein>
    <recommendedName>
        <fullName>Venom prothrombin activator pseutarin-C catalytic subunit</fullName>
        <shortName>PCCS</shortName>
        <shortName>vPA</shortName>
        <ecNumber evidence="7 9">3.4.21.6</ecNumber>
    </recommendedName>
    <alternativeName>
        <fullName>Venom coagulation factor Xa-like protease</fullName>
    </alternativeName>
    <component>
        <recommendedName>
            <fullName>Pseutarin-C catalytic subunit light chain</fullName>
        </recommendedName>
    </component>
    <component>
        <recommendedName>
            <fullName>Pseutarin-C catalytic subunit heavy chain</fullName>
        </recommendedName>
    </component>
</protein>
<accession>Q56VR3</accession>
<accession>A5X463</accession>
<accession>Q6IT09</accession>
<accession>Q6IT10</accession>
<dbReference type="EC" id="3.4.21.6" evidence="7 9"/>
<dbReference type="EMBL" id="AY260939">
    <property type="protein sequence ID" value="AAP86642.1"/>
    <property type="molecule type" value="mRNA"/>
</dbReference>
<dbReference type="EMBL" id="AY631239">
    <property type="protein sequence ID" value="AAT42491.1"/>
    <property type="molecule type" value="mRNA"/>
</dbReference>
<dbReference type="EMBL" id="DQ533835">
    <property type="protein sequence ID" value="ABG02407.1"/>
    <property type="molecule type" value="Genomic_DNA"/>
</dbReference>
<dbReference type="EMBL" id="AY631238">
    <property type="protein sequence ID" value="AAT42490.1"/>
    <property type="molecule type" value="mRNA"/>
</dbReference>
<dbReference type="PDB" id="4BXS">
    <property type="method" value="X-ray"/>
    <property type="resolution" value="3.32 A"/>
    <property type="chains" value="A=41-463"/>
</dbReference>
<dbReference type="PDB" id="4BXW">
    <property type="method" value="X-ray"/>
    <property type="resolution" value="2.71 A"/>
    <property type="chains" value="A/B=41-463"/>
</dbReference>
<dbReference type="PDBsum" id="4BXS"/>
<dbReference type="PDBsum" id="4BXW"/>
<dbReference type="SMR" id="Q56VR3"/>
<dbReference type="MEROPS" id="S01.446"/>
<dbReference type="iPTMnet" id="Q56VR3"/>
<dbReference type="BRENDA" id="3.4.21.60">
    <property type="organism ID" value="6821"/>
</dbReference>
<dbReference type="EvolutionaryTrace" id="Q56VR3"/>
<dbReference type="Proteomes" id="UP000472273">
    <property type="component" value="Unplaced"/>
</dbReference>
<dbReference type="GO" id="GO:0005576">
    <property type="term" value="C:extracellular region"/>
    <property type="evidence" value="ECO:0000314"/>
    <property type="project" value="UniProtKB"/>
</dbReference>
<dbReference type="GO" id="GO:0005615">
    <property type="term" value="C:extracellular space"/>
    <property type="evidence" value="ECO:0007669"/>
    <property type="project" value="TreeGrafter"/>
</dbReference>
<dbReference type="GO" id="GO:0032991">
    <property type="term" value="C:protein-containing complex"/>
    <property type="evidence" value="ECO:0000314"/>
    <property type="project" value="UniProtKB"/>
</dbReference>
<dbReference type="GO" id="GO:0005509">
    <property type="term" value="F:calcium ion binding"/>
    <property type="evidence" value="ECO:0007669"/>
    <property type="project" value="InterPro"/>
</dbReference>
<dbReference type="GO" id="GO:0016504">
    <property type="term" value="F:peptidase activator activity"/>
    <property type="evidence" value="ECO:0007669"/>
    <property type="project" value="UniProtKB-KW"/>
</dbReference>
<dbReference type="GO" id="GO:0004252">
    <property type="term" value="F:serine-type endopeptidase activity"/>
    <property type="evidence" value="ECO:0000314"/>
    <property type="project" value="UniProtKB"/>
</dbReference>
<dbReference type="GO" id="GO:0090729">
    <property type="term" value="F:toxin activity"/>
    <property type="evidence" value="ECO:0007669"/>
    <property type="project" value="UniProtKB-KW"/>
</dbReference>
<dbReference type="GO" id="GO:0007596">
    <property type="term" value="P:blood coagulation"/>
    <property type="evidence" value="ECO:0007669"/>
    <property type="project" value="InterPro"/>
</dbReference>
<dbReference type="GO" id="GO:0035807">
    <property type="term" value="P:induction of blood coagulation in another organism"/>
    <property type="evidence" value="ECO:0007669"/>
    <property type="project" value="UniProtKB-ARBA"/>
</dbReference>
<dbReference type="GO" id="GO:0006508">
    <property type="term" value="P:proteolysis"/>
    <property type="evidence" value="ECO:0007669"/>
    <property type="project" value="UniProtKB-KW"/>
</dbReference>
<dbReference type="GO" id="GO:0044469">
    <property type="term" value="P:venom-mediated blood coagulation"/>
    <property type="evidence" value="ECO:0000314"/>
    <property type="project" value="UniProtKB"/>
</dbReference>
<dbReference type="CDD" id="cd00054">
    <property type="entry name" value="EGF_CA"/>
    <property type="match status" value="1"/>
</dbReference>
<dbReference type="CDD" id="cd00190">
    <property type="entry name" value="Tryp_SPc"/>
    <property type="match status" value="1"/>
</dbReference>
<dbReference type="FunFam" id="2.10.25.10:FF:000513">
    <property type="entry name" value="Coagulation factor VII"/>
    <property type="match status" value="1"/>
</dbReference>
<dbReference type="FunFam" id="2.40.10.10:FF:000013">
    <property type="entry name" value="Coagulation factor X"/>
    <property type="match status" value="1"/>
</dbReference>
<dbReference type="FunFam" id="2.10.25.10:FF:000162">
    <property type="entry name" value="Coagulation factor X (Predicted)"/>
    <property type="match status" value="1"/>
</dbReference>
<dbReference type="FunFam" id="4.10.740.10:FF:000001">
    <property type="entry name" value="vitamin K-dependent protein S"/>
    <property type="match status" value="1"/>
</dbReference>
<dbReference type="Gene3D" id="4.10.740.10">
    <property type="entry name" value="Coagulation Factor IX"/>
    <property type="match status" value="1"/>
</dbReference>
<dbReference type="Gene3D" id="2.10.25.10">
    <property type="entry name" value="Laminin"/>
    <property type="match status" value="2"/>
</dbReference>
<dbReference type="Gene3D" id="2.40.10.10">
    <property type="entry name" value="Trypsin-like serine proteases"/>
    <property type="match status" value="2"/>
</dbReference>
<dbReference type="InterPro" id="IPR017857">
    <property type="entry name" value="Coagulation_fac-like_Gla_dom"/>
</dbReference>
<dbReference type="InterPro" id="IPR001881">
    <property type="entry name" value="EGF-like_Ca-bd_dom"/>
</dbReference>
<dbReference type="InterPro" id="IPR000742">
    <property type="entry name" value="EGF-like_dom"/>
</dbReference>
<dbReference type="InterPro" id="IPR000152">
    <property type="entry name" value="EGF-type_Asp/Asn_hydroxyl_site"/>
</dbReference>
<dbReference type="InterPro" id="IPR018097">
    <property type="entry name" value="EGF_Ca-bd_CS"/>
</dbReference>
<dbReference type="InterPro" id="IPR035972">
    <property type="entry name" value="GLA-like_dom_SF"/>
</dbReference>
<dbReference type="InterPro" id="IPR000294">
    <property type="entry name" value="GLA_domain"/>
</dbReference>
<dbReference type="InterPro" id="IPR009030">
    <property type="entry name" value="Growth_fac_rcpt_cys_sf"/>
</dbReference>
<dbReference type="InterPro" id="IPR012224">
    <property type="entry name" value="Pept_S1A_FX"/>
</dbReference>
<dbReference type="InterPro" id="IPR050442">
    <property type="entry name" value="Peptidase_S1_coag_factors"/>
</dbReference>
<dbReference type="InterPro" id="IPR009003">
    <property type="entry name" value="Peptidase_S1_PA"/>
</dbReference>
<dbReference type="InterPro" id="IPR043504">
    <property type="entry name" value="Peptidase_S1_PA_chymotrypsin"/>
</dbReference>
<dbReference type="InterPro" id="IPR001314">
    <property type="entry name" value="Peptidase_S1A"/>
</dbReference>
<dbReference type="InterPro" id="IPR001254">
    <property type="entry name" value="Trypsin_dom"/>
</dbReference>
<dbReference type="InterPro" id="IPR018114">
    <property type="entry name" value="TRYPSIN_HIS"/>
</dbReference>
<dbReference type="InterPro" id="IPR033116">
    <property type="entry name" value="TRYPSIN_SER"/>
</dbReference>
<dbReference type="PANTHER" id="PTHR24278">
    <property type="entry name" value="COAGULATION FACTOR"/>
    <property type="match status" value="1"/>
</dbReference>
<dbReference type="PANTHER" id="PTHR24278:SF28">
    <property type="entry name" value="COAGULATION FACTOR X"/>
    <property type="match status" value="1"/>
</dbReference>
<dbReference type="Pfam" id="PF00008">
    <property type="entry name" value="EGF"/>
    <property type="match status" value="1"/>
</dbReference>
<dbReference type="Pfam" id="PF14670">
    <property type="entry name" value="FXa_inhibition"/>
    <property type="match status" value="1"/>
</dbReference>
<dbReference type="Pfam" id="PF00594">
    <property type="entry name" value="Gla"/>
    <property type="match status" value="1"/>
</dbReference>
<dbReference type="Pfam" id="PF00089">
    <property type="entry name" value="Trypsin"/>
    <property type="match status" value="1"/>
</dbReference>
<dbReference type="PIRSF" id="PIRSF001143">
    <property type="entry name" value="Factor_X"/>
    <property type="match status" value="1"/>
</dbReference>
<dbReference type="PRINTS" id="PR00722">
    <property type="entry name" value="CHYMOTRYPSIN"/>
</dbReference>
<dbReference type="PRINTS" id="PR00001">
    <property type="entry name" value="GLABLOOD"/>
</dbReference>
<dbReference type="SMART" id="SM00181">
    <property type="entry name" value="EGF"/>
    <property type="match status" value="2"/>
</dbReference>
<dbReference type="SMART" id="SM00179">
    <property type="entry name" value="EGF_CA"/>
    <property type="match status" value="1"/>
</dbReference>
<dbReference type="SMART" id="SM00069">
    <property type="entry name" value="GLA"/>
    <property type="match status" value="1"/>
</dbReference>
<dbReference type="SMART" id="SM00020">
    <property type="entry name" value="Tryp_SPc"/>
    <property type="match status" value="1"/>
</dbReference>
<dbReference type="SUPFAM" id="SSF57630">
    <property type="entry name" value="GLA-domain"/>
    <property type="match status" value="1"/>
</dbReference>
<dbReference type="SUPFAM" id="SSF57184">
    <property type="entry name" value="Growth factor receptor domain"/>
    <property type="match status" value="1"/>
</dbReference>
<dbReference type="SUPFAM" id="SSF50494">
    <property type="entry name" value="Trypsin-like serine proteases"/>
    <property type="match status" value="1"/>
</dbReference>
<dbReference type="PROSITE" id="PS00010">
    <property type="entry name" value="ASX_HYDROXYL"/>
    <property type="match status" value="1"/>
</dbReference>
<dbReference type="PROSITE" id="PS00022">
    <property type="entry name" value="EGF_1"/>
    <property type="match status" value="1"/>
</dbReference>
<dbReference type="PROSITE" id="PS01186">
    <property type="entry name" value="EGF_2"/>
    <property type="match status" value="2"/>
</dbReference>
<dbReference type="PROSITE" id="PS50026">
    <property type="entry name" value="EGF_3"/>
    <property type="match status" value="1"/>
</dbReference>
<dbReference type="PROSITE" id="PS01187">
    <property type="entry name" value="EGF_CA"/>
    <property type="match status" value="1"/>
</dbReference>
<dbReference type="PROSITE" id="PS00011">
    <property type="entry name" value="GLA_1"/>
    <property type="match status" value="1"/>
</dbReference>
<dbReference type="PROSITE" id="PS50998">
    <property type="entry name" value="GLA_2"/>
    <property type="match status" value="1"/>
</dbReference>
<dbReference type="PROSITE" id="PS50240">
    <property type="entry name" value="TRYPSIN_DOM"/>
    <property type="match status" value="1"/>
</dbReference>
<dbReference type="PROSITE" id="PS00134">
    <property type="entry name" value="TRYPSIN_HIS"/>
    <property type="match status" value="1"/>
</dbReference>
<dbReference type="PROSITE" id="PS00135">
    <property type="entry name" value="TRYPSIN_SER"/>
    <property type="match status" value="1"/>
</dbReference>